<evidence type="ECO:0000255" key="1">
    <source>
        <dbReference type="PROSITE-ProRule" id="PRU00159"/>
    </source>
</evidence>
<evidence type="ECO:0000255" key="2">
    <source>
        <dbReference type="PROSITE-ProRule" id="PRU10027"/>
    </source>
</evidence>
<evidence type="ECO:0000256" key="3">
    <source>
        <dbReference type="SAM" id="MobiDB-lite"/>
    </source>
</evidence>
<evidence type="ECO:0000269" key="4">
    <source>
    </source>
</evidence>
<evidence type="ECO:0000269" key="5">
    <source>
    </source>
</evidence>
<evidence type="ECO:0000269" key="6">
    <source>
    </source>
</evidence>
<evidence type="ECO:0000269" key="7">
    <source>
    </source>
</evidence>
<evidence type="ECO:0000269" key="8">
    <source>
    </source>
</evidence>
<evidence type="ECO:0000269" key="9">
    <source>
    </source>
</evidence>
<evidence type="ECO:0000269" key="10">
    <source>
    </source>
</evidence>
<evidence type="ECO:0000269" key="11">
    <source>
    </source>
</evidence>
<evidence type="ECO:0000269" key="12">
    <source>
    </source>
</evidence>
<evidence type="ECO:0000303" key="13">
    <source>
    </source>
</evidence>
<evidence type="ECO:0000303" key="14">
    <source>
    </source>
</evidence>
<evidence type="ECO:0000305" key="15"/>
<accession>Q62070</accession>
<accession>A2AER1</accession>
<accession>Q62071</accession>
<accession>Q62072</accession>
<accession>Q8R2P0</accession>
<gene>
    <name type="primary">Pim2</name>
    <name type="synonym">Pim-2</name>
</gene>
<feature type="chain" id="PRO_0000024366" description="Serine/threonine-protein kinase pim-2">
    <location>
        <begin position="1"/>
        <end position="370"/>
    </location>
</feature>
<feature type="domain" description="Protein kinase" evidence="1">
    <location>
        <begin position="91"/>
        <end position="345"/>
    </location>
</feature>
<feature type="region of interest" description="Disordered" evidence="3">
    <location>
        <begin position="1"/>
        <end position="42"/>
    </location>
</feature>
<feature type="region of interest" description="Disordered" evidence="3">
    <location>
        <begin position="61"/>
        <end position="83"/>
    </location>
</feature>
<feature type="region of interest" description="Disordered" evidence="3">
    <location>
        <begin position="349"/>
        <end position="370"/>
    </location>
</feature>
<feature type="compositionally biased region" description="Low complexity" evidence="3">
    <location>
        <begin position="1"/>
        <end position="25"/>
    </location>
</feature>
<feature type="compositionally biased region" description="Pro residues" evidence="3">
    <location>
        <begin position="69"/>
        <end position="78"/>
    </location>
</feature>
<feature type="active site" description="Proton acceptor" evidence="1 2">
    <location>
        <position position="222"/>
    </location>
</feature>
<feature type="binding site" evidence="1">
    <location>
        <begin position="97"/>
        <end position="105"/>
    </location>
    <ligand>
        <name>ATP</name>
        <dbReference type="ChEBI" id="CHEBI:30616"/>
    </ligand>
</feature>
<feature type="binding site" evidence="1">
    <location>
        <position position="120"/>
    </location>
    <ligand>
        <name>ATP</name>
        <dbReference type="ChEBI" id="CHEBI:30616"/>
    </ligand>
</feature>
<feature type="splice variant" id="VSP_018856" description="In isoform 3." evidence="13 14">
    <location>
        <begin position="1"/>
        <end position="59"/>
    </location>
</feature>
<feature type="splice variant" id="VSP_018854" description="In isoform 2." evidence="14">
    <location>
        <begin position="1"/>
        <end position="25"/>
    </location>
</feature>
<feature type="splice variant" id="VSP_018855" description="In isoform 2." evidence="14">
    <original>L</original>
    <variation>M</variation>
    <location>
        <position position="26"/>
    </location>
</feature>
<keyword id="KW-0024">Alternative initiation</keyword>
<keyword id="KW-0053">Apoptosis</keyword>
<keyword id="KW-0067">ATP-binding</keyword>
<keyword id="KW-0131">Cell cycle</keyword>
<keyword id="KW-0418">Kinase</keyword>
<keyword id="KW-0547">Nucleotide-binding</keyword>
<keyword id="KW-0597">Phosphoprotein</keyword>
<keyword id="KW-0656">Proto-oncogene</keyword>
<keyword id="KW-1185">Reference proteome</keyword>
<keyword id="KW-0723">Serine/threonine-protein kinase</keyword>
<keyword id="KW-0808">Transferase</keyword>
<dbReference type="EC" id="2.7.11.1"/>
<dbReference type="EMBL" id="L41495">
    <property type="protein sequence ID" value="AAA98922.1"/>
    <property type="molecule type" value="mRNA"/>
</dbReference>
<dbReference type="EMBL" id="L41495">
    <property type="protein sequence ID" value="AAA98923.1"/>
    <property type="molecule type" value="mRNA"/>
</dbReference>
<dbReference type="EMBL" id="L41495">
    <property type="protein sequence ID" value="AAA98924.1"/>
    <property type="molecule type" value="mRNA"/>
</dbReference>
<dbReference type="EMBL" id="AL671978">
    <property type="status" value="NOT_ANNOTATED_CDS"/>
    <property type="molecule type" value="Genomic_DNA"/>
</dbReference>
<dbReference type="EMBL" id="BC027376">
    <property type="protein sequence ID" value="AAH27376.1"/>
    <property type="molecule type" value="mRNA"/>
</dbReference>
<dbReference type="CCDS" id="CCDS29976.1">
    <molecule id="Q62070-1"/>
</dbReference>
<dbReference type="PIR" id="S55333">
    <property type="entry name" value="S55333"/>
</dbReference>
<dbReference type="RefSeq" id="NP_613072.1">
    <molecule id="Q62070-1"/>
    <property type="nucleotide sequence ID" value="NM_138606.2"/>
</dbReference>
<dbReference type="SMR" id="Q62070"/>
<dbReference type="BioGRID" id="202167">
    <property type="interactions" value="1"/>
</dbReference>
<dbReference type="FunCoup" id="Q62070">
    <property type="interactions" value="316"/>
</dbReference>
<dbReference type="STRING" id="10090.ENSMUSP00000152537"/>
<dbReference type="GlyGen" id="Q62070">
    <property type="glycosylation" value="1 site"/>
</dbReference>
<dbReference type="iPTMnet" id="Q62070"/>
<dbReference type="PhosphoSitePlus" id="Q62070"/>
<dbReference type="PaxDb" id="10090-ENSMUSP00000033495"/>
<dbReference type="ProteomicsDB" id="288213">
    <molecule id="Q62070-1"/>
</dbReference>
<dbReference type="ProteomicsDB" id="288214">
    <molecule id="Q62070-2"/>
</dbReference>
<dbReference type="ProteomicsDB" id="288215">
    <molecule id="Q62070-3"/>
</dbReference>
<dbReference type="DNASU" id="18715"/>
<dbReference type="Ensembl" id="ENSMUST00000033495.16">
    <molecule id="Q62070-1"/>
    <property type="protein sequence ID" value="ENSMUSP00000033495.11"/>
    <property type="gene ID" value="ENSMUSG00000031155.18"/>
</dbReference>
<dbReference type="GeneID" id="18715"/>
<dbReference type="KEGG" id="mmu:18715"/>
<dbReference type="UCSC" id="uc009smz.2">
    <molecule id="Q62070-1"/>
    <property type="organism name" value="mouse"/>
</dbReference>
<dbReference type="AGR" id="MGI:97587"/>
<dbReference type="CTD" id="11040"/>
<dbReference type="MGI" id="MGI:97587">
    <property type="gene designation" value="Pim2"/>
</dbReference>
<dbReference type="eggNOG" id="KOG0583">
    <property type="taxonomic scope" value="Eukaryota"/>
</dbReference>
<dbReference type="GeneTree" id="ENSGT00940000161689"/>
<dbReference type="InParanoid" id="Q62070"/>
<dbReference type="OrthoDB" id="5783at9989"/>
<dbReference type="PhylomeDB" id="Q62070"/>
<dbReference type="BioGRID-ORCS" id="18715">
    <property type="hits" value="2 hits in 80 CRISPR screens"/>
</dbReference>
<dbReference type="ChiTaRS" id="Pim2">
    <property type="organism name" value="mouse"/>
</dbReference>
<dbReference type="PRO" id="PR:Q62070"/>
<dbReference type="Proteomes" id="UP000000589">
    <property type="component" value="Chromosome X"/>
</dbReference>
<dbReference type="RNAct" id="Q62070">
    <property type="molecule type" value="protein"/>
</dbReference>
<dbReference type="GO" id="GO:0005524">
    <property type="term" value="F:ATP binding"/>
    <property type="evidence" value="ECO:0007669"/>
    <property type="project" value="UniProtKB-KW"/>
</dbReference>
<dbReference type="GO" id="GO:0004672">
    <property type="term" value="F:protein kinase activity"/>
    <property type="evidence" value="ECO:0000314"/>
    <property type="project" value="MGI"/>
</dbReference>
<dbReference type="GO" id="GO:0106310">
    <property type="term" value="F:protein serine kinase activity"/>
    <property type="evidence" value="ECO:0007669"/>
    <property type="project" value="RHEA"/>
</dbReference>
<dbReference type="GO" id="GO:0004674">
    <property type="term" value="F:protein serine/threonine kinase activity"/>
    <property type="evidence" value="ECO:0000314"/>
    <property type="project" value="UniProtKB"/>
</dbReference>
<dbReference type="GO" id="GO:0008637">
    <property type="term" value="P:apoptotic mitochondrial changes"/>
    <property type="evidence" value="ECO:0000314"/>
    <property type="project" value="MGI"/>
</dbReference>
<dbReference type="GO" id="GO:0006915">
    <property type="term" value="P:apoptotic process"/>
    <property type="evidence" value="ECO:0000315"/>
    <property type="project" value="MGI"/>
</dbReference>
<dbReference type="GO" id="GO:0000082">
    <property type="term" value="P:G1/S transition of mitotic cell cycle"/>
    <property type="evidence" value="ECO:0000250"/>
    <property type="project" value="UniProtKB"/>
</dbReference>
<dbReference type="GO" id="GO:0016236">
    <property type="term" value="P:macroautophagy"/>
    <property type="evidence" value="ECO:0000315"/>
    <property type="project" value="MGI"/>
</dbReference>
<dbReference type="GO" id="GO:0043066">
    <property type="term" value="P:negative regulation of apoptotic process"/>
    <property type="evidence" value="ECO:0000314"/>
    <property type="project" value="MGI"/>
</dbReference>
<dbReference type="GO" id="GO:0008285">
    <property type="term" value="P:negative regulation of cell population proliferation"/>
    <property type="evidence" value="ECO:0000250"/>
    <property type="project" value="UniProtKB"/>
</dbReference>
<dbReference type="GO" id="GO:0010508">
    <property type="term" value="P:positive regulation of autophagy"/>
    <property type="evidence" value="ECO:0000315"/>
    <property type="project" value="UniProtKB"/>
</dbReference>
<dbReference type="GO" id="GO:0043123">
    <property type="term" value="P:positive regulation of canonical NF-kappaB signal transduction"/>
    <property type="evidence" value="ECO:0000314"/>
    <property type="project" value="UniProtKB"/>
</dbReference>
<dbReference type="GO" id="GO:0045893">
    <property type="term" value="P:positive regulation of DNA-templated transcription"/>
    <property type="evidence" value="ECO:0000315"/>
    <property type="project" value="UniProtKB"/>
</dbReference>
<dbReference type="GO" id="GO:0016239">
    <property type="term" value="P:positive regulation of macroautophagy"/>
    <property type="evidence" value="ECO:0000315"/>
    <property type="project" value="MGI"/>
</dbReference>
<dbReference type="GO" id="GO:0006468">
    <property type="term" value="P:protein phosphorylation"/>
    <property type="evidence" value="ECO:0000314"/>
    <property type="project" value="UniProtKB"/>
</dbReference>
<dbReference type="GO" id="GO:0050821">
    <property type="term" value="P:protein stabilization"/>
    <property type="evidence" value="ECO:0000314"/>
    <property type="project" value="UniProtKB"/>
</dbReference>
<dbReference type="GO" id="GO:0009615">
    <property type="term" value="P:response to virus"/>
    <property type="evidence" value="ECO:0007669"/>
    <property type="project" value="Ensembl"/>
</dbReference>
<dbReference type="FunFam" id="1.10.510.10:FF:000413">
    <property type="entry name" value="Serine/threonine-protein kinase"/>
    <property type="match status" value="1"/>
</dbReference>
<dbReference type="FunFam" id="3.30.200.20:FF:000363">
    <property type="entry name" value="Serine/threonine-protein kinase"/>
    <property type="match status" value="1"/>
</dbReference>
<dbReference type="Gene3D" id="3.30.200.20">
    <property type="entry name" value="Phosphorylase Kinase, domain 1"/>
    <property type="match status" value="1"/>
</dbReference>
<dbReference type="Gene3D" id="1.10.510.10">
    <property type="entry name" value="Transferase(Phosphotransferase) domain 1"/>
    <property type="match status" value="1"/>
</dbReference>
<dbReference type="InterPro" id="IPR011009">
    <property type="entry name" value="Kinase-like_dom_sf"/>
</dbReference>
<dbReference type="InterPro" id="IPR051138">
    <property type="entry name" value="PIM_Ser/Thr_kinase"/>
</dbReference>
<dbReference type="InterPro" id="IPR000719">
    <property type="entry name" value="Prot_kinase_dom"/>
</dbReference>
<dbReference type="InterPro" id="IPR017441">
    <property type="entry name" value="Protein_kinase_ATP_BS"/>
</dbReference>
<dbReference type="InterPro" id="IPR008271">
    <property type="entry name" value="Ser/Thr_kinase_AS"/>
</dbReference>
<dbReference type="PANTHER" id="PTHR22984">
    <property type="entry name" value="SERINE/THREONINE-PROTEIN KINASE PIM"/>
    <property type="match status" value="1"/>
</dbReference>
<dbReference type="PANTHER" id="PTHR22984:SF10">
    <property type="entry name" value="SERINE_THREONINE-PROTEIN KINASE PIM-2"/>
    <property type="match status" value="1"/>
</dbReference>
<dbReference type="Pfam" id="PF00069">
    <property type="entry name" value="Pkinase"/>
    <property type="match status" value="1"/>
</dbReference>
<dbReference type="SMART" id="SM00220">
    <property type="entry name" value="S_TKc"/>
    <property type="match status" value="1"/>
</dbReference>
<dbReference type="SUPFAM" id="SSF56112">
    <property type="entry name" value="Protein kinase-like (PK-like)"/>
    <property type="match status" value="1"/>
</dbReference>
<dbReference type="PROSITE" id="PS00107">
    <property type="entry name" value="PROTEIN_KINASE_ATP"/>
    <property type="match status" value="1"/>
</dbReference>
<dbReference type="PROSITE" id="PS50011">
    <property type="entry name" value="PROTEIN_KINASE_DOM"/>
    <property type="match status" value="1"/>
</dbReference>
<dbReference type="PROSITE" id="PS00108">
    <property type="entry name" value="PROTEIN_KINASE_ST"/>
    <property type="match status" value="1"/>
</dbReference>
<proteinExistence type="evidence at protein level"/>
<reference key="1">
    <citation type="journal article" date="1995" name="EMBO J.">
        <title>Proviral tagging in E mu-myc transgenic mice lacking the Pim-1 proto-oncogene leads to compensatory activation of Pim-2.</title>
        <authorList>
            <person name="van der Lugt N.M."/>
            <person name="Domen J."/>
            <person name="Verhoeven E."/>
            <person name="Linders K."/>
            <person name="van der Gulden H."/>
            <person name="Allen J."/>
            <person name="Berns A."/>
        </authorList>
    </citation>
    <scope>NUCLEOTIDE SEQUENCE [MRNA] (ISOFORMS 1; 2 AND 3)</scope>
    <scope>ALTERNATIVE INITIATION</scope>
</reference>
<reference key="2">
    <citation type="journal article" date="2009" name="PLoS Biol.">
        <title>Lineage-specific biology revealed by a finished genome assembly of the mouse.</title>
        <authorList>
            <person name="Church D.M."/>
            <person name="Goodstadt L."/>
            <person name="Hillier L.W."/>
            <person name="Zody M.C."/>
            <person name="Goldstein S."/>
            <person name="She X."/>
            <person name="Bult C.J."/>
            <person name="Agarwala R."/>
            <person name="Cherry J.L."/>
            <person name="DiCuccio M."/>
            <person name="Hlavina W."/>
            <person name="Kapustin Y."/>
            <person name="Meric P."/>
            <person name="Maglott D."/>
            <person name="Birtle Z."/>
            <person name="Marques A.C."/>
            <person name="Graves T."/>
            <person name="Zhou S."/>
            <person name="Teague B."/>
            <person name="Potamousis K."/>
            <person name="Churas C."/>
            <person name="Place M."/>
            <person name="Herschleb J."/>
            <person name="Runnheim R."/>
            <person name="Forrest D."/>
            <person name="Amos-Landgraf J."/>
            <person name="Schwartz D.C."/>
            <person name="Cheng Z."/>
            <person name="Lindblad-Toh K."/>
            <person name="Eichler E.E."/>
            <person name="Ponting C.P."/>
        </authorList>
    </citation>
    <scope>NUCLEOTIDE SEQUENCE [LARGE SCALE GENOMIC DNA]</scope>
    <source>
        <strain>C57BL/6J</strain>
    </source>
</reference>
<reference key="3">
    <citation type="journal article" date="2004" name="Genome Res.">
        <title>The status, quality, and expansion of the NIH full-length cDNA project: the Mammalian Gene Collection (MGC).</title>
        <authorList>
            <consortium name="The MGC Project Team"/>
        </authorList>
    </citation>
    <scope>NUCLEOTIDE SEQUENCE [LARGE SCALE MRNA] (ISOFORM 3)</scope>
    <source>
        <strain>FVB/N</strain>
        <tissue>Mammary gland</tissue>
    </source>
</reference>
<reference key="4">
    <citation type="journal article" date="1997" name="Oncogene">
        <title>Pim-2 transgene induces lymphoid tumors, exhibiting potent synergy with c-myc.</title>
        <authorList>
            <person name="Allen J.D."/>
            <person name="Verhoeven E."/>
            <person name="Domen J."/>
            <person name="van der Valk M."/>
            <person name="Berns A."/>
        </authorList>
    </citation>
    <scope>TISSUE SPECIFICITY</scope>
    <scope>FUNCTION IN TUMORIGENESIS</scope>
    <scope>INDUCTION BY IL2; IL3; IL4; IL7; IL9 AND INTERFERON-GAMMA</scope>
</reference>
<reference key="5">
    <citation type="journal article" date="2003" name="Genes Dev.">
        <title>The serine/threonine kinase Pim-2 is a transcriptionally regulated apoptotic inhibitor.</title>
        <authorList>
            <person name="Fox C.J."/>
            <person name="Hammerman P.S."/>
            <person name="Cinalli R.M."/>
            <person name="Master S.R."/>
            <person name="Chodosh L.A."/>
            <person name="Thompson C.B."/>
        </authorList>
    </citation>
    <scope>FUNCTION AS APOPTOTIC INHIBITOR</scope>
    <scope>AUTOPHOSPHORYLATION</scope>
    <scope>PHOSPHORYLATION OF BAD</scope>
    <scope>ALTERNATIVE SPLICING (ISOFORMS 1; 2 AND 3)</scope>
</reference>
<reference key="6">
    <citation type="journal article" date="2003" name="J. Biol. Chem.">
        <title>The PIM-2 kinase phosphorylates BAD on serine 112 and reverses BAD-induced cell death.</title>
        <authorList>
            <person name="Yan B."/>
            <person name="Zemskova M."/>
            <person name="Holder S."/>
            <person name="Chin V."/>
            <person name="Kraft A."/>
            <person name="Koskinen P.J."/>
            <person name="Lilly M."/>
        </authorList>
    </citation>
    <scope>INDUCTION BY IL3</scope>
    <scope>FUNCTION AS APOPTOTIC INHIBITOR</scope>
    <scope>PHOSPHORYLATION OF BAD</scope>
    <scope>MUTAGENESIS</scope>
</reference>
<reference key="7">
    <citation type="journal article" date="2004" name="Cancer Res.">
        <title>Lymphocyte transformation by Pim-2 is dependent on nuclear factor-kappaB activation.</title>
        <authorList>
            <person name="Hammerman P.S."/>
            <person name="Fox C.J."/>
            <person name="Cinalli R.M."/>
            <person name="Xu A."/>
            <person name="Wagner J.D."/>
            <person name="Lindsten T."/>
            <person name="Thompson C.B."/>
        </authorList>
    </citation>
    <scope>FUNCTION AS A POSITIVE REGULATOR OF I-KAPPAB KINASE/NF-KAPPAB CASCADE</scope>
    <scope>PHOSPHORYLATION OF MAP3K8/COT</scope>
</reference>
<reference key="8">
    <citation type="journal article" date="2004" name="Mol. Cell. Biol.">
        <title>Mice deficient for all PIM kinases display reduced body size and impaired responses to hematopoietic growth factors.</title>
        <authorList>
            <person name="Mikkers H."/>
            <person name="Nawijn M."/>
            <person name="Allen J."/>
            <person name="Brouwers C."/>
            <person name="Verhoeven E."/>
            <person name="Jonkers J."/>
            <person name="Berns A."/>
        </authorList>
    </citation>
    <scope>DISRUPTION PHENOTYPE</scope>
    <scope>FUNCTION</scope>
</reference>
<reference key="9">
    <citation type="journal article" date="2005" name="Blood">
        <title>Pim and Akt oncogenes are independent regulators of hematopoietic cell growth and survival.</title>
        <authorList>
            <person name="Hammerman P.S."/>
            <person name="Fox C.J."/>
            <person name="Birnbaum M.J."/>
            <person name="Thompson C.B."/>
        </authorList>
    </citation>
    <scope>FUNCTION IN THE REGULATION OF CAP-DEPENDENT PROTEIN TRANSLATION</scope>
</reference>
<reference key="10">
    <citation type="journal article" date="2005" name="J. Exp. Med.">
        <title>The Pim kinases control rapamycin-resistant T cell survival and activation.</title>
        <authorList>
            <person name="Fox C.J."/>
            <person name="Hammerman P.S."/>
            <person name="Thompson C.B."/>
        </authorList>
    </citation>
    <scope>DISRUPTION PHENOTYPE</scope>
    <scope>INDUCTION BY IL4 AND IL7</scope>
</reference>
<reference key="11">
    <citation type="journal article" date="2007" name="J. Cell. Physiol.">
        <title>PIM-2 is an independent regulator of chondrocyte survival and autophagy in the epiphyseal growth plate.</title>
        <authorList>
            <person name="Bohensky J."/>
            <person name="Shapiro I.M."/>
            <person name="Leshinsky S."/>
            <person name="Watanabe H."/>
            <person name="Srinivas V."/>
        </authorList>
    </citation>
    <scope>FUNCTION</scope>
    <scope>TISSUE SPECIFICITY</scope>
</reference>
<reference key="12">
    <citation type="journal article" date="2008" name="Oncogene">
        <title>Pim kinase-dependent inhibition of c-Myc degradation.</title>
        <authorList>
            <person name="Zhang Y."/>
            <person name="Wang Z."/>
            <person name="Li X."/>
            <person name="Magnuson N.S."/>
        </authorList>
    </citation>
    <scope>FUNCTION IN PHOSPHORYLATION OF MYC</scope>
    <scope>INTERACTION WITH MYC</scope>
</reference>
<organism>
    <name type="scientific">Mus musculus</name>
    <name type="common">Mouse</name>
    <dbReference type="NCBI Taxonomy" id="10090"/>
    <lineage>
        <taxon>Eukaryota</taxon>
        <taxon>Metazoa</taxon>
        <taxon>Chordata</taxon>
        <taxon>Craniata</taxon>
        <taxon>Vertebrata</taxon>
        <taxon>Euteleostomi</taxon>
        <taxon>Mammalia</taxon>
        <taxon>Eutheria</taxon>
        <taxon>Euarchontoglires</taxon>
        <taxon>Glires</taxon>
        <taxon>Rodentia</taxon>
        <taxon>Myomorpha</taxon>
        <taxon>Muroidea</taxon>
        <taxon>Muridae</taxon>
        <taxon>Murinae</taxon>
        <taxon>Mus</taxon>
        <taxon>Mus</taxon>
    </lineage>
</organism>
<name>PIM2_MOUSE</name>
<sequence>MARATNLNAAPSAGASGPPDSLPSTLAPPSPGSPAALPRASTPCGLSGFSGLNIRSTSSMLTKPLQGHPSPPVTPTQPPGGKDRAAFEAEYRLGPLLGKGGFGTVFAGHRVTDRRQVAIKVISRNRVLGWSTVSDSVTCPLEVALLWKVGEGNGHPGVIRLLDWFETPEGFMLVLERPMPAQDLFDYITEKGPLGESCSRSFFTQVVAAVQHCHARGVVHRDIKDENILIDLCRGSIKLIDFGSGALLHDEPYTDFDGTRVYSPPEWISRHQYHALPATVWSLGVLLYDMVCGDIPFERDQEILEAELHFPAHVSPDCCALIRRCLAPKPCSRPSLEEILLDPWMQSPAEEKPINSSKGSPTPLPWSLLP</sequence>
<comment type="function">
    <text evidence="4 5 6 7 9 10 11 12">Proto-oncogene with serine/threonine kinase activity involved in cell survival and cell proliferation. Exerts its oncogenic activity through: the regulation of MYC transcriptional activity, the regulation of cell cycle progression, the regulation of cap-dependent protein translation and through survival signaling by phosphorylation of a pro-apoptotic protein, BAD. Phosphorylation of MYC leads to an increase of MYC protein stability and thereby an increase of transcriptional activity. The stabilization of MYC exerted by PIM2 might explain partly the strong synergism between these 2 oncogenes in tumorigenesis. Regulates cap-dependent protein translation in a mammalian target of rapamycin complex 1 (mTORC1)-independent manner and in parallel to the PI3K-Akt pathway. Mediates survival signaling through phosphorylation of BAD, which induces release of the anti-apoptotic protein Bcl-X(L)/BCL2L1. Promotes cell survival in response to a variety of proliferative signals via positive regulation of the I-kappa-B kinase/NF-kappa-B cascade; this process requires phosphorylation of MAP3K8/COT. Promotes growth factor-independent proliferation by phosphorylation of cell cycle factors such as CDKN1A and CDKN1B. Involved in the positive regulation of chondrocyte survival and autophagy in the epiphyseal growth plate.</text>
</comment>
<comment type="catalytic activity">
    <reaction>
        <text>L-seryl-[protein] + ATP = O-phospho-L-seryl-[protein] + ADP + H(+)</text>
        <dbReference type="Rhea" id="RHEA:17989"/>
        <dbReference type="Rhea" id="RHEA-COMP:9863"/>
        <dbReference type="Rhea" id="RHEA-COMP:11604"/>
        <dbReference type="ChEBI" id="CHEBI:15378"/>
        <dbReference type="ChEBI" id="CHEBI:29999"/>
        <dbReference type="ChEBI" id="CHEBI:30616"/>
        <dbReference type="ChEBI" id="CHEBI:83421"/>
        <dbReference type="ChEBI" id="CHEBI:456216"/>
        <dbReference type="EC" id="2.7.11.1"/>
    </reaction>
</comment>
<comment type="catalytic activity">
    <reaction>
        <text>L-threonyl-[protein] + ATP = O-phospho-L-threonyl-[protein] + ADP + H(+)</text>
        <dbReference type="Rhea" id="RHEA:46608"/>
        <dbReference type="Rhea" id="RHEA-COMP:11060"/>
        <dbReference type="Rhea" id="RHEA-COMP:11605"/>
        <dbReference type="ChEBI" id="CHEBI:15378"/>
        <dbReference type="ChEBI" id="CHEBI:30013"/>
        <dbReference type="ChEBI" id="CHEBI:30616"/>
        <dbReference type="ChEBI" id="CHEBI:61977"/>
        <dbReference type="ChEBI" id="CHEBI:456216"/>
        <dbReference type="EC" id="2.7.11.1"/>
    </reaction>
</comment>
<comment type="subunit">
    <text evidence="11">Interacts with MYC.</text>
</comment>
<comment type="alternative products">
    <event type="alternative initiation"/>
    <isoform>
        <id>Q62070-1</id>
        <name>1</name>
        <sequence type="displayed"/>
    </isoform>
    <isoform>
        <id>Q62070-2</id>
        <name>2</name>
        <sequence type="described" ref="VSP_018854 VSP_018855"/>
    </isoform>
    <isoform>
        <id>Q62070-3</id>
        <name>3</name>
        <sequence type="described" ref="VSP_018856"/>
    </isoform>
</comment>
<comment type="tissue specificity">
    <text evidence="10 12">Widely expressed, with highest expression in spleen, thymus and brain. Expressed in epiphyseal chondrocytes.</text>
</comment>
<comment type="induction">
    <text evidence="5 8 12">Induced by a wide range of growth factors and mitogens; IL2, IL3, IL4, IL7,IL9 and by interferon-gamma (IFNG).</text>
</comment>
<comment type="PTM">
    <text evidence="4 5 7">Autophosphorylated.</text>
</comment>
<comment type="disruption phenotype">
    <text evidence="6 8">Mice are viable and fertile. Deficient mice shown reduced T-cell activation and expansion in the presence of the serine/threonine protein kinase mTOR inhibitor rapamycin. Triple knockout mice PIM1/PIM2/PIM3 shown a profound reduction in body size at birth and throughout postnatal life due to a reduction in the number of cells rather than cell size.</text>
</comment>
<comment type="miscellaneous">
    <molecule>Isoform 1</molecule>
    <text>Initiates from CTG codon.</text>
</comment>
<comment type="miscellaneous">
    <molecule>Isoform 2</molecule>
    <text evidence="15">Initiates from CTG codon.</text>
</comment>
<comment type="miscellaneous">
    <molecule>Isoform 3</molecule>
    <text evidence="15">Mutagen in position: 61:K-&gt;A (loss of kinase activity).</text>
</comment>
<comment type="similarity">
    <text evidence="15">Belongs to the protein kinase superfamily. CAMK Ser/Thr protein kinase family. PIM subfamily.</text>
</comment>
<protein>
    <recommendedName>
        <fullName>Serine/threonine-protein kinase pim-2</fullName>
        <ecNumber>2.7.11.1</ecNumber>
    </recommendedName>
</protein>